<feature type="chain" id="PRO_0000354375" description="Small ribosomal subunit protein uS19c">
    <location>
        <begin position="1"/>
        <end position="91"/>
    </location>
</feature>
<protein>
    <recommendedName>
        <fullName evidence="1">Small ribosomal subunit protein uS19c</fullName>
    </recommendedName>
    <alternativeName>
        <fullName evidence="2">30S ribosomal protein S19, organellar chromatophore</fullName>
    </alternativeName>
</protein>
<proteinExistence type="inferred from homology"/>
<evidence type="ECO:0000255" key="1">
    <source>
        <dbReference type="HAMAP-Rule" id="MF_00531"/>
    </source>
</evidence>
<evidence type="ECO:0000305" key="2"/>
<dbReference type="EMBL" id="CP000815">
    <property type="protein sequence ID" value="ACB43023.1"/>
    <property type="molecule type" value="Genomic_DNA"/>
</dbReference>
<dbReference type="RefSeq" id="YP_002049233.1">
    <property type="nucleotide sequence ID" value="NC_011087.1"/>
</dbReference>
<dbReference type="SMR" id="B1X504"/>
<dbReference type="GeneID" id="6481793"/>
<dbReference type="GO" id="GO:0005763">
    <property type="term" value="C:mitochondrial small ribosomal subunit"/>
    <property type="evidence" value="ECO:0007669"/>
    <property type="project" value="TreeGrafter"/>
</dbReference>
<dbReference type="GO" id="GO:0070111">
    <property type="term" value="C:organellar chromatophore"/>
    <property type="evidence" value="ECO:0007669"/>
    <property type="project" value="UniProtKB-SubCell"/>
</dbReference>
<dbReference type="GO" id="GO:0009536">
    <property type="term" value="C:plastid"/>
    <property type="evidence" value="ECO:0007669"/>
    <property type="project" value="UniProtKB-KW"/>
</dbReference>
<dbReference type="GO" id="GO:0019843">
    <property type="term" value="F:rRNA binding"/>
    <property type="evidence" value="ECO:0007669"/>
    <property type="project" value="UniProtKB-KW"/>
</dbReference>
<dbReference type="GO" id="GO:0003735">
    <property type="term" value="F:structural constituent of ribosome"/>
    <property type="evidence" value="ECO:0007669"/>
    <property type="project" value="InterPro"/>
</dbReference>
<dbReference type="GO" id="GO:0000028">
    <property type="term" value="P:ribosomal small subunit assembly"/>
    <property type="evidence" value="ECO:0007669"/>
    <property type="project" value="TreeGrafter"/>
</dbReference>
<dbReference type="GO" id="GO:0006412">
    <property type="term" value="P:translation"/>
    <property type="evidence" value="ECO:0007669"/>
    <property type="project" value="InterPro"/>
</dbReference>
<dbReference type="FunFam" id="3.30.860.10:FF:000001">
    <property type="entry name" value="30S ribosomal protein S19"/>
    <property type="match status" value="1"/>
</dbReference>
<dbReference type="Gene3D" id="3.30.860.10">
    <property type="entry name" value="30s Ribosomal Protein S19, Chain A"/>
    <property type="match status" value="1"/>
</dbReference>
<dbReference type="HAMAP" id="MF_00531">
    <property type="entry name" value="Ribosomal_uS19"/>
    <property type="match status" value="1"/>
</dbReference>
<dbReference type="InterPro" id="IPR002222">
    <property type="entry name" value="Ribosomal_uS19"/>
</dbReference>
<dbReference type="InterPro" id="IPR005732">
    <property type="entry name" value="Ribosomal_uS19_bac-type"/>
</dbReference>
<dbReference type="InterPro" id="IPR020934">
    <property type="entry name" value="Ribosomal_uS19_CS"/>
</dbReference>
<dbReference type="InterPro" id="IPR023575">
    <property type="entry name" value="Ribosomal_uS19_SF"/>
</dbReference>
<dbReference type="NCBIfam" id="TIGR01050">
    <property type="entry name" value="rpsS_bact"/>
    <property type="match status" value="1"/>
</dbReference>
<dbReference type="PANTHER" id="PTHR11880">
    <property type="entry name" value="RIBOSOMAL PROTEIN S19P FAMILY MEMBER"/>
    <property type="match status" value="1"/>
</dbReference>
<dbReference type="PANTHER" id="PTHR11880:SF8">
    <property type="entry name" value="SMALL RIBOSOMAL SUBUNIT PROTEIN US19M"/>
    <property type="match status" value="1"/>
</dbReference>
<dbReference type="Pfam" id="PF00203">
    <property type="entry name" value="Ribosomal_S19"/>
    <property type="match status" value="1"/>
</dbReference>
<dbReference type="PIRSF" id="PIRSF002144">
    <property type="entry name" value="Ribosomal_S19"/>
    <property type="match status" value="1"/>
</dbReference>
<dbReference type="PRINTS" id="PR00975">
    <property type="entry name" value="RIBOSOMALS19"/>
</dbReference>
<dbReference type="SUPFAM" id="SSF54570">
    <property type="entry name" value="Ribosomal protein S19"/>
    <property type="match status" value="1"/>
</dbReference>
<dbReference type="PROSITE" id="PS00323">
    <property type="entry name" value="RIBOSOMAL_S19"/>
    <property type="match status" value="1"/>
</dbReference>
<geneLocation type="organellar chromatophore"/>
<keyword id="KW-0994">Organellar chromatophore</keyword>
<keyword id="KW-0934">Plastid</keyword>
<keyword id="KW-0687">Ribonucleoprotein</keyword>
<keyword id="KW-0689">Ribosomal protein</keyword>
<keyword id="KW-0694">RNA-binding</keyword>
<keyword id="KW-0699">rRNA-binding</keyword>
<sequence length="91" mass="10209">MGRSLKKGPFVADSLLRKVEKQNATEDKSVIKTWSRSSTILPMMIGHTIAVHNGKVHIPVFLTEQMVGHKLGEFAPTRTFRGHIKDKKGTR</sequence>
<accession>B1X504</accession>
<organism>
    <name type="scientific">Paulinella chromatophora</name>
    <dbReference type="NCBI Taxonomy" id="39717"/>
    <lineage>
        <taxon>Eukaryota</taxon>
        <taxon>Sar</taxon>
        <taxon>Rhizaria</taxon>
        <taxon>Cercozoa</taxon>
        <taxon>Imbricatea</taxon>
        <taxon>Silicofilosea</taxon>
        <taxon>Euglyphida</taxon>
        <taxon>Paulinellidae</taxon>
        <taxon>Paulinella</taxon>
    </lineage>
</organism>
<gene>
    <name evidence="1" type="primary">rps19</name>
    <name type="ordered locus">PCC_0593</name>
</gene>
<comment type="function">
    <text evidence="1">Protein S19 forms a complex with S13 that binds strongly to the 16S ribosomal RNA.</text>
</comment>
<comment type="subcellular location">
    <subcellularLocation>
        <location>Plastid</location>
        <location>Organellar chromatophore</location>
    </subcellularLocation>
</comment>
<comment type="similarity">
    <text evidence="1">Belongs to the universal ribosomal protein uS19 family.</text>
</comment>
<reference key="1">
    <citation type="journal article" date="2008" name="Curr. Biol.">
        <title>Chromatophore genome sequence of Paulinella sheds light on acquisition of photosynthesis by eukaryotes.</title>
        <authorList>
            <person name="Nowack E.C.M."/>
            <person name="Melkonian M."/>
            <person name="Gloeckner G."/>
        </authorList>
    </citation>
    <scope>NUCLEOTIDE SEQUENCE [LARGE SCALE GENOMIC DNA]</scope>
</reference>
<name>RR19_PAUCH</name>